<sequence>MTFVVTDNCIKCKYTDCVEVCPVDCFYEGPNFLVIHPDECIDCALCEPECPAQAIFSEDEVPEDQQEFIELNADLAEVWPNITEKKDALADAEEWDGVKDKLQYLER</sequence>
<evidence type="ECO:0000250" key="1"/>
<evidence type="ECO:0000255" key="2">
    <source>
        <dbReference type="PROSITE-ProRule" id="PRU00711"/>
    </source>
</evidence>
<evidence type="ECO:0000269" key="3">
    <source>
    </source>
</evidence>
<protein>
    <recommendedName>
        <fullName>Ferredoxin 1</fullName>
    </recommendedName>
</protein>
<organism>
    <name type="scientific">Stutzerimonas stutzeri</name>
    <name type="common">Pseudomonas stutzeri</name>
    <dbReference type="NCBI Taxonomy" id="316"/>
    <lineage>
        <taxon>Bacteria</taxon>
        <taxon>Pseudomonadati</taxon>
        <taxon>Pseudomonadota</taxon>
        <taxon>Gammaproteobacteria</taxon>
        <taxon>Pseudomonadales</taxon>
        <taxon>Pseudomonadaceae</taxon>
        <taxon>Stutzerimonas</taxon>
    </lineage>
</organism>
<reference key="1">
    <citation type="journal article" date="1988" name="J. Biochem.">
        <title>Pseudomonas stutzeri ferredoxin: close similarity to Azotobacter vinelandii and Pseudomonas ovalis ferredoxins.</title>
        <authorList>
            <person name="Saeki K."/>
            <person name="Wakabayashi S."/>
            <person name="Zumft W.G."/>
            <person name="Matsubara H."/>
        </authorList>
    </citation>
    <scope>PROTEIN SEQUENCE OF 2-107</scope>
    <source>
        <strain>ATCC 14405 / JCM 20778 / CIP 107696 / IAM 12931 / LMG 2243 / NCIMB 568 / Baumann 218 / ZoBell 632</strain>
    </source>
</reference>
<feature type="initiator methionine" description="Removed" evidence="3">
    <location>
        <position position="1"/>
    </location>
</feature>
<feature type="chain" id="PRO_0000159107" description="Ferredoxin 1">
    <location>
        <begin position="2"/>
        <end position="107"/>
    </location>
</feature>
<feature type="domain" description="4Fe-4S ferredoxin-type 1" evidence="2">
    <location>
        <begin position="2"/>
        <end position="30"/>
    </location>
</feature>
<feature type="domain" description="4Fe-4S ferredoxin-type 2" evidence="2">
    <location>
        <begin position="31"/>
        <end position="60"/>
    </location>
</feature>
<feature type="binding site" evidence="1">
    <location>
        <position position="9"/>
    </location>
    <ligand>
        <name>[3Fe-4S] cluster</name>
        <dbReference type="ChEBI" id="CHEBI:21137"/>
    </ligand>
</feature>
<feature type="binding site" evidence="1">
    <location>
        <position position="17"/>
    </location>
    <ligand>
        <name>[3Fe-4S] cluster</name>
        <dbReference type="ChEBI" id="CHEBI:21137"/>
    </ligand>
</feature>
<feature type="binding site" evidence="1">
    <location>
        <position position="21"/>
    </location>
    <ligand>
        <name>[4Fe-4S] cluster</name>
        <dbReference type="ChEBI" id="CHEBI:49883"/>
    </ligand>
</feature>
<feature type="binding site" evidence="1">
    <location>
        <position position="40"/>
    </location>
    <ligand>
        <name>[4Fe-4S] cluster</name>
        <dbReference type="ChEBI" id="CHEBI:49883"/>
    </ligand>
</feature>
<feature type="binding site" evidence="1">
    <location>
        <position position="43"/>
    </location>
    <ligand>
        <name>[4Fe-4S] cluster</name>
        <dbReference type="ChEBI" id="CHEBI:49883"/>
    </ligand>
</feature>
<feature type="binding site" evidence="1">
    <location>
        <position position="46"/>
    </location>
    <ligand>
        <name>[4Fe-4S] cluster</name>
        <dbReference type="ChEBI" id="CHEBI:49883"/>
    </ligand>
</feature>
<feature type="binding site" evidence="1">
    <location>
        <position position="50"/>
    </location>
    <ligand>
        <name>[3Fe-4S] cluster</name>
        <dbReference type="ChEBI" id="CHEBI:21137"/>
    </ligand>
</feature>
<name>FER_STUST</name>
<comment type="function">
    <text>Ferredoxins are iron-sulfur proteins that transfer electrons in a wide variety of metabolic reactions.</text>
</comment>
<comment type="cofactor">
    <cofactor>
        <name>[4Fe-4S] cluster</name>
        <dbReference type="ChEBI" id="CHEBI:49883"/>
    </cofactor>
    <text>Binds 1 [4Fe-4S] cluster.</text>
</comment>
<comment type="cofactor">
    <cofactor>
        <name>[3Fe-4S] cluster</name>
        <dbReference type="ChEBI" id="CHEBI:21137"/>
    </cofactor>
    <text>Binds 1 [3Fe-4S] cluster.</text>
</comment>
<dbReference type="PIR" id="A30025">
    <property type="entry name" value="FEPSTV"/>
</dbReference>
<dbReference type="RefSeq" id="WP_003285709.1">
    <property type="nucleotide sequence ID" value="NZ_WWNS01000006.1"/>
</dbReference>
<dbReference type="SMR" id="P08811"/>
<dbReference type="GeneID" id="77260852"/>
<dbReference type="eggNOG" id="COG1146">
    <property type="taxonomic scope" value="Bacteria"/>
</dbReference>
<dbReference type="OMA" id="DRMLYIH"/>
<dbReference type="OrthoDB" id="9803397at2"/>
<dbReference type="GO" id="GO:0051538">
    <property type="term" value="F:3 iron, 4 sulfur cluster binding"/>
    <property type="evidence" value="ECO:0007669"/>
    <property type="project" value="UniProtKB-KW"/>
</dbReference>
<dbReference type="GO" id="GO:0051539">
    <property type="term" value="F:4 iron, 4 sulfur cluster binding"/>
    <property type="evidence" value="ECO:0007669"/>
    <property type="project" value="UniProtKB-KW"/>
</dbReference>
<dbReference type="GO" id="GO:0009055">
    <property type="term" value="F:electron transfer activity"/>
    <property type="evidence" value="ECO:0007669"/>
    <property type="project" value="InterPro"/>
</dbReference>
<dbReference type="GO" id="GO:0046872">
    <property type="term" value="F:metal ion binding"/>
    <property type="evidence" value="ECO:0007669"/>
    <property type="project" value="UniProtKB-KW"/>
</dbReference>
<dbReference type="Gene3D" id="3.30.70.20">
    <property type="match status" value="1"/>
</dbReference>
<dbReference type="InterPro" id="IPR017896">
    <property type="entry name" value="4Fe4S_Fe-S-bd"/>
</dbReference>
<dbReference type="InterPro" id="IPR017900">
    <property type="entry name" value="4Fe4S_Fe_S_CS"/>
</dbReference>
<dbReference type="InterPro" id="IPR000813">
    <property type="entry name" value="7Fe_ferredoxin"/>
</dbReference>
<dbReference type="InterPro" id="IPR022569">
    <property type="entry name" value="Fd_C"/>
</dbReference>
<dbReference type="InterPro" id="IPR054829">
    <property type="entry name" value="FdxA"/>
</dbReference>
<dbReference type="InterPro" id="IPR050294">
    <property type="entry name" value="RnfB_subfamily"/>
</dbReference>
<dbReference type="NCBIfam" id="NF045490">
    <property type="entry name" value="FdxA_Protbact"/>
    <property type="match status" value="1"/>
</dbReference>
<dbReference type="PANTHER" id="PTHR42859:SF2">
    <property type="entry name" value="FERREDOXIN"/>
    <property type="match status" value="1"/>
</dbReference>
<dbReference type="PANTHER" id="PTHR42859">
    <property type="entry name" value="OXIDOREDUCTASE"/>
    <property type="match status" value="1"/>
</dbReference>
<dbReference type="Pfam" id="PF11953">
    <property type="entry name" value="DUF3470"/>
    <property type="match status" value="1"/>
</dbReference>
<dbReference type="Pfam" id="PF00037">
    <property type="entry name" value="Fer4"/>
    <property type="match status" value="1"/>
</dbReference>
<dbReference type="PRINTS" id="PR00354">
    <property type="entry name" value="7FE8SFRDOXIN"/>
</dbReference>
<dbReference type="SUPFAM" id="SSF54862">
    <property type="entry name" value="4Fe-4S ferredoxins"/>
    <property type="match status" value="1"/>
</dbReference>
<dbReference type="PROSITE" id="PS00198">
    <property type="entry name" value="4FE4S_FER_1"/>
    <property type="match status" value="1"/>
</dbReference>
<dbReference type="PROSITE" id="PS51379">
    <property type="entry name" value="4FE4S_FER_2"/>
    <property type="match status" value="2"/>
</dbReference>
<accession>P08811</accession>
<keyword id="KW-0003">3Fe-4S</keyword>
<keyword id="KW-0004">4Fe-4S</keyword>
<keyword id="KW-0903">Direct protein sequencing</keyword>
<keyword id="KW-0249">Electron transport</keyword>
<keyword id="KW-0408">Iron</keyword>
<keyword id="KW-0411">Iron-sulfur</keyword>
<keyword id="KW-0479">Metal-binding</keyword>
<keyword id="KW-0677">Repeat</keyword>
<keyword id="KW-0813">Transport</keyword>
<proteinExistence type="evidence at protein level"/>